<accession>A0QA85</accession>
<comment type="catalytic activity">
    <reaction evidence="1">
        <text>GTP + H2O = 7,8-dihydroneopterin 3'-triphosphate + formate + H(+)</text>
        <dbReference type="Rhea" id="RHEA:17473"/>
        <dbReference type="ChEBI" id="CHEBI:15377"/>
        <dbReference type="ChEBI" id="CHEBI:15378"/>
        <dbReference type="ChEBI" id="CHEBI:15740"/>
        <dbReference type="ChEBI" id="CHEBI:37565"/>
        <dbReference type="ChEBI" id="CHEBI:58462"/>
        <dbReference type="EC" id="3.5.4.16"/>
    </reaction>
</comment>
<comment type="pathway">
    <text evidence="1">Cofactor biosynthesis; 7,8-dihydroneopterin triphosphate biosynthesis; 7,8-dihydroneopterin triphosphate from GTP: step 1/1.</text>
</comment>
<comment type="subunit">
    <text evidence="1">Homomer.</text>
</comment>
<comment type="similarity">
    <text evidence="1">Belongs to the GTP cyclohydrolase I family.</text>
</comment>
<reference key="1">
    <citation type="submission" date="2006-10" db="EMBL/GenBank/DDBJ databases">
        <authorList>
            <person name="Fleischmann R.D."/>
            <person name="Dodson R.J."/>
            <person name="Haft D.H."/>
            <person name="Merkel J.S."/>
            <person name="Nelson W.C."/>
            <person name="Fraser C.M."/>
        </authorList>
    </citation>
    <scope>NUCLEOTIDE SEQUENCE [LARGE SCALE GENOMIC DNA]</scope>
    <source>
        <strain>104</strain>
    </source>
</reference>
<dbReference type="EC" id="3.5.4.16" evidence="1"/>
<dbReference type="EMBL" id="CP000479">
    <property type="protein sequence ID" value="ABK66473.1"/>
    <property type="molecule type" value="Genomic_DNA"/>
</dbReference>
<dbReference type="RefSeq" id="WP_011723631.1">
    <property type="nucleotide sequence ID" value="NC_008595.1"/>
</dbReference>
<dbReference type="SMR" id="A0QA85"/>
<dbReference type="KEGG" id="mav:MAV_0543"/>
<dbReference type="HOGENOM" id="CLU_049768_3_3_11"/>
<dbReference type="UniPathway" id="UPA00848">
    <property type="reaction ID" value="UER00151"/>
</dbReference>
<dbReference type="Proteomes" id="UP000001574">
    <property type="component" value="Chromosome"/>
</dbReference>
<dbReference type="GO" id="GO:0005737">
    <property type="term" value="C:cytoplasm"/>
    <property type="evidence" value="ECO:0007669"/>
    <property type="project" value="TreeGrafter"/>
</dbReference>
<dbReference type="GO" id="GO:0005525">
    <property type="term" value="F:GTP binding"/>
    <property type="evidence" value="ECO:0007669"/>
    <property type="project" value="TreeGrafter"/>
</dbReference>
<dbReference type="GO" id="GO:0003934">
    <property type="term" value="F:GTP cyclohydrolase I activity"/>
    <property type="evidence" value="ECO:0007669"/>
    <property type="project" value="UniProtKB-UniRule"/>
</dbReference>
<dbReference type="GO" id="GO:0008270">
    <property type="term" value="F:zinc ion binding"/>
    <property type="evidence" value="ECO:0007669"/>
    <property type="project" value="UniProtKB-UniRule"/>
</dbReference>
<dbReference type="GO" id="GO:0006730">
    <property type="term" value="P:one-carbon metabolic process"/>
    <property type="evidence" value="ECO:0007669"/>
    <property type="project" value="UniProtKB-UniRule"/>
</dbReference>
<dbReference type="GO" id="GO:0006729">
    <property type="term" value="P:tetrahydrobiopterin biosynthetic process"/>
    <property type="evidence" value="ECO:0007669"/>
    <property type="project" value="TreeGrafter"/>
</dbReference>
<dbReference type="GO" id="GO:0046654">
    <property type="term" value="P:tetrahydrofolate biosynthetic process"/>
    <property type="evidence" value="ECO:0007669"/>
    <property type="project" value="UniProtKB-UniRule"/>
</dbReference>
<dbReference type="FunFam" id="1.10.286.10:FF:000001">
    <property type="entry name" value="GTP cyclohydrolase 1"/>
    <property type="match status" value="1"/>
</dbReference>
<dbReference type="FunFam" id="3.30.1130.10:FF:000001">
    <property type="entry name" value="GTP cyclohydrolase 1"/>
    <property type="match status" value="1"/>
</dbReference>
<dbReference type="Gene3D" id="1.10.286.10">
    <property type="match status" value="1"/>
</dbReference>
<dbReference type="Gene3D" id="3.30.1130.10">
    <property type="match status" value="1"/>
</dbReference>
<dbReference type="HAMAP" id="MF_00223">
    <property type="entry name" value="FolE"/>
    <property type="match status" value="1"/>
</dbReference>
<dbReference type="InterPro" id="IPR043133">
    <property type="entry name" value="GTP-CH-I_C/QueF"/>
</dbReference>
<dbReference type="InterPro" id="IPR043134">
    <property type="entry name" value="GTP-CH-I_N"/>
</dbReference>
<dbReference type="InterPro" id="IPR001474">
    <property type="entry name" value="GTP_CycHdrlase_I"/>
</dbReference>
<dbReference type="InterPro" id="IPR018234">
    <property type="entry name" value="GTP_CycHdrlase_I_CS"/>
</dbReference>
<dbReference type="InterPro" id="IPR020602">
    <property type="entry name" value="GTP_CycHdrlase_I_dom"/>
</dbReference>
<dbReference type="NCBIfam" id="TIGR00063">
    <property type="entry name" value="folE"/>
    <property type="match status" value="1"/>
</dbReference>
<dbReference type="NCBIfam" id="NF006825">
    <property type="entry name" value="PRK09347.1-2"/>
    <property type="match status" value="1"/>
</dbReference>
<dbReference type="NCBIfam" id="NF006826">
    <property type="entry name" value="PRK09347.1-3"/>
    <property type="match status" value="1"/>
</dbReference>
<dbReference type="PANTHER" id="PTHR11109:SF7">
    <property type="entry name" value="GTP CYCLOHYDROLASE 1"/>
    <property type="match status" value="1"/>
</dbReference>
<dbReference type="PANTHER" id="PTHR11109">
    <property type="entry name" value="GTP CYCLOHYDROLASE I"/>
    <property type="match status" value="1"/>
</dbReference>
<dbReference type="Pfam" id="PF01227">
    <property type="entry name" value="GTP_cyclohydroI"/>
    <property type="match status" value="1"/>
</dbReference>
<dbReference type="SUPFAM" id="SSF55620">
    <property type="entry name" value="Tetrahydrobiopterin biosynthesis enzymes-like"/>
    <property type="match status" value="1"/>
</dbReference>
<dbReference type="PROSITE" id="PS00859">
    <property type="entry name" value="GTP_CYCLOHYDROL_1_1"/>
    <property type="match status" value="1"/>
</dbReference>
<dbReference type="PROSITE" id="PS00860">
    <property type="entry name" value="GTP_CYCLOHYDROL_1_2"/>
    <property type="match status" value="1"/>
</dbReference>
<evidence type="ECO:0000255" key="1">
    <source>
        <dbReference type="HAMAP-Rule" id="MF_00223"/>
    </source>
</evidence>
<name>GCH1_MYCA1</name>
<gene>
    <name evidence="1" type="primary">folE</name>
    <name type="ordered locus">MAV_0543</name>
</gene>
<protein>
    <recommendedName>
        <fullName evidence="1">GTP cyclohydrolase 1</fullName>
        <ecNumber evidence="1">3.5.4.16</ecNumber>
    </recommendedName>
    <alternativeName>
        <fullName evidence="1">GTP cyclohydrolase I</fullName>
        <shortName evidence="1">GTP-CH-I</shortName>
    </alternativeName>
</protein>
<keyword id="KW-0378">Hydrolase</keyword>
<keyword id="KW-0479">Metal-binding</keyword>
<keyword id="KW-0554">One-carbon metabolism</keyword>
<keyword id="KW-0862">Zinc</keyword>
<sequence length="204" mass="22353">MAGNGSAPDTATHQVRQFDQARAEAAVRELLFAIGENPDRHGLAETPARVARAYREMFAGLYTDPDSVLNTMFDEEHDELVLVKEIPLYSTCEHHLVSFHGVAHVGYIPGNDGRVTGLSKIARLVDLYAKRPQVQERLTSQIADALVKKLNPRGVIVVVEAEHLCMAMRGVRKPGAVTTTSAVRGLFKTNAASRAEALDLILRK</sequence>
<organism>
    <name type="scientific">Mycobacterium avium (strain 104)</name>
    <dbReference type="NCBI Taxonomy" id="243243"/>
    <lineage>
        <taxon>Bacteria</taxon>
        <taxon>Bacillati</taxon>
        <taxon>Actinomycetota</taxon>
        <taxon>Actinomycetes</taxon>
        <taxon>Mycobacteriales</taxon>
        <taxon>Mycobacteriaceae</taxon>
        <taxon>Mycobacterium</taxon>
        <taxon>Mycobacterium avium complex (MAC)</taxon>
    </lineage>
</organism>
<feature type="chain" id="PRO_1000190079" description="GTP cyclohydrolase 1">
    <location>
        <begin position="1"/>
        <end position="204"/>
    </location>
</feature>
<feature type="binding site" evidence="1">
    <location>
        <position position="92"/>
    </location>
    <ligand>
        <name>Zn(2+)</name>
        <dbReference type="ChEBI" id="CHEBI:29105"/>
    </ligand>
</feature>
<feature type="binding site" evidence="1">
    <location>
        <position position="95"/>
    </location>
    <ligand>
        <name>Zn(2+)</name>
        <dbReference type="ChEBI" id="CHEBI:29105"/>
    </ligand>
</feature>
<feature type="binding site" evidence="1">
    <location>
        <position position="165"/>
    </location>
    <ligand>
        <name>Zn(2+)</name>
        <dbReference type="ChEBI" id="CHEBI:29105"/>
    </ligand>
</feature>
<proteinExistence type="inferred from homology"/>